<organism>
    <name type="scientific">Gloeobacter violaceus (strain ATCC 29082 / PCC 7421)</name>
    <dbReference type="NCBI Taxonomy" id="251221"/>
    <lineage>
        <taxon>Bacteria</taxon>
        <taxon>Bacillati</taxon>
        <taxon>Cyanobacteriota</taxon>
        <taxon>Cyanophyceae</taxon>
        <taxon>Gloeobacterales</taxon>
        <taxon>Gloeobacteraceae</taxon>
        <taxon>Gloeobacter</taxon>
    </lineage>
</organism>
<keyword id="KW-0067">ATP-binding</keyword>
<keyword id="KW-0997">Cell inner membrane</keyword>
<keyword id="KW-1003">Cell membrane</keyword>
<keyword id="KW-0472">Membrane</keyword>
<keyword id="KW-0547">Nucleotide-binding</keyword>
<keyword id="KW-1185">Reference proteome</keyword>
<keyword id="KW-1278">Translocase</keyword>
<keyword id="KW-0813">Transport</keyword>
<protein>
    <recommendedName>
        <fullName>Putative ABC transporter ATP-binding protein gll0289</fullName>
        <ecNumber>7.-.-.-</ecNumber>
    </recommendedName>
</protein>
<evidence type="ECO:0000250" key="1"/>
<evidence type="ECO:0000255" key="2">
    <source>
        <dbReference type="PROSITE-ProRule" id="PRU00434"/>
    </source>
</evidence>
<evidence type="ECO:0000305" key="3"/>
<proteinExistence type="inferred from homology"/>
<reference key="1">
    <citation type="journal article" date="2003" name="DNA Res.">
        <title>Complete genome structure of Gloeobacter violaceus PCC 7421, a cyanobacterium that lacks thylakoids.</title>
        <authorList>
            <person name="Nakamura Y."/>
            <person name="Kaneko T."/>
            <person name="Sato S."/>
            <person name="Mimuro M."/>
            <person name="Miyashita H."/>
            <person name="Tsuchiya T."/>
            <person name="Sasamoto S."/>
            <person name="Watanabe A."/>
            <person name="Kawashima K."/>
            <person name="Kishida Y."/>
            <person name="Kiyokawa C."/>
            <person name="Kohara M."/>
            <person name="Matsumoto M."/>
            <person name="Matsuno A."/>
            <person name="Nakazaki N."/>
            <person name="Shimpo S."/>
            <person name="Takeuchi C."/>
            <person name="Yamada M."/>
            <person name="Tabata S."/>
        </authorList>
    </citation>
    <scope>NUCLEOTIDE SEQUENCE [LARGE SCALE GENOMIC DNA]</scope>
    <source>
        <strain>ATCC 29082 / PCC 7421</strain>
    </source>
</reference>
<dbReference type="EC" id="7.-.-.-"/>
<dbReference type="EMBL" id="BA000045">
    <property type="protein sequence ID" value="BAC88230.1"/>
    <property type="molecule type" value="Genomic_DNA"/>
</dbReference>
<dbReference type="RefSeq" id="NP_923235.1">
    <property type="nucleotide sequence ID" value="NC_005125.1"/>
</dbReference>
<dbReference type="RefSeq" id="WP_011140293.1">
    <property type="nucleotide sequence ID" value="NC_005125.1"/>
</dbReference>
<dbReference type="SMR" id="Q7NNW9"/>
<dbReference type="STRING" id="251221.gene:10757761"/>
<dbReference type="EnsemblBacteria" id="BAC88230">
    <property type="protein sequence ID" value="BAC88230"/>
    <property type="gene ID" value="BAC88230"/>
</dbReference>
<dbReference type="KEGG" id="gvi:gll0289"/>
<dbReference type="PATRIC" id="fig|251221.4.peg.291"/>
<dbReference type="eggNOG" id="COG1122">
    <property type="taxonomic scope" value="Bacteria"/>
</dbReference>
<dbReference type="HOGENOM" id="CLU_000604_1_22_3"/>
<dbReference type="InParanoid" id="Q7NNW9"/>
<dbReference type="OrthoDB" id="9784332at2"/>
<dbReference type="PhylomeDB" id="Q7NNW9"/>
<dbReference type="Proteomes" id="UP000000557">
    <property type="component" value="Chromosome"/>
</dbReference>
<dbReference type="GO" id="GO:0043190">
    <property type="term" value="C:ATP-binding cassette (ABC) transporter complex"/>
    <property type="evidence" value="ECO:0000318"/>
    <property type="project" value="GO_Central"/>
</dbReference>
<dbReference type="GO" id="GO:0005524">
    <property type="term" value="F:ATP binding"/>
    <property type="evidence" value="ECO:0000318"/>
    <property type="project" value="GO_Central"/>
</dbReference>
<dbReference type="GO" id="GO:0016887">
    <property type="term" value="F:ATP hydrolysis activity"/>
    <property type="evidence" value="ECO:0007669"/>
    <property type="project" value="InterPro"/>
</dbReference>
<dbReference type="GO" id="GO:0042626">
    <property type="term" value="F:ATPase-coupled transmembrane transporter activity"/>
    <property type="evidence" value="ECO:0000318"/>
    <property type="project" value="GO_Central"/>
</dbReference>
<dbReference type="CDD" id="cd03225">
    <property type="entry name" value="ABC_cobalt_CbiO_domain1"/>
    <property type="match status" value="1"/>
</dbReference>
<dbReference type="FunFam" id="3.40.50.300:FF:000224">
    <property type="entry name" value="Energy-coupling factor transporter ATP-binding protein EcfA"/>
    <property type="match status" value="1"/>
</dbReference>
<dbReference type="Gene3D" id="3.40.50.300">
    <property type="entry name" value="P-loop containing nucleotide triphosphate hydrolases"/>
    <property type="match status" value="1"/>
</dbReference>
<dbReference type="InterPro" id="IPR003593">
    <property type="entry name" value="AAA+_ATPase"/>
</dbReference>
<dbReference type="InterPro" id="IPR003439">
    <property type="entry name" value="ABC_transporter-like_ATP-bd"/>
</dbReference>
<dbReference type="InterPro" id="IPR015856">
    <property type="entry name" value="ABC_transpr_CbiO/EcfA_su"/>
</dbReference>
<dbReference type="InterPro" id="IPR050095">
    <property type="entry name" value="ECF_ABC_transporter_ATP-bd"/>
</dbReference>
<dbReference type="InterPro" id="IPR027417">
    <property type="entry name" value="P-loop_NTPase"/>
</dbReference>
<dbReference type="PANTHER" id="PTHR43553:SF24">
    <property type="entry name" value="ENERGY-COUPLING FACTOR TRANSPORTER ATP-BINDING PROTEIN ECFA1"/>
    <property type="match status" value="1"/>
</dbReference>
<dbReference type="PANTHER" id="PTHR43553">
    <property type="entry name" value="HEAVY METAL TRANSPORTER"/>
    <property type="match status" value="1"/>
</dbReference>
<dbReference type="Pfam" id="PF00005">
    <property type="entry name" value="ABC_tran"/>
    <property type="match status" value="1"/>
</dbReference>
<dbReference type="SMART" id="SM00382">
    <property type="entry name" value="AAA"/>
    <property type="match status" value="1"/>
</dbReference>
<dbReference type="SUPFAM" id="SSF52540">
    <property type="entry name" value="P-loop containing nucleoside triphosphate hydrolases"/>
    <property type="match status" value="1"/>
</dbReference>
<dbReference type="PROSITE" id="PS50893">
    <property type="entry name" value="ABC_TRANSPORTER_2"/>
    <property type="match status" value="1"/>
</dbReference>
<comment type="function">
    <text evidence="1">Probably part of an ABC transporter complex. Responsible for energy coupling to the transport system (By similarity).</text>
</comment>
<comment type="subcellular location">
    <subcellularLocation>
        <location evidence="1">Cell inner membrane</location>
        <topology evidence="1">Peripheral membrane protein</topology>
    </subcellularLocation>
</comment>
<comment type="similarity">
    <text evidence="3">Belongs to the ABC transporter superfamily.</text>
</comment>
<feature type="chain" id="PRO_0000092015" description="Putative ABC transporter ATP-binding protein gll0289">
    <location>
        <begin position="1"/>
        <end position="244"/>
    </location>
</feature>
<feature type="domain" description="ABC transporter" evidence="2">
    <location>
        <begin position="5"/>
        <end position="237"/>
    </location>
</feature>
<feature type="binding site" evidence="2">
    <location>
        <begin position="38"/>
        <end position="45"/>
    </location>
    <ligand>
        <name>ATP</name>
        <dbReference type="ChEBI" id="CHEBI:30616"/>
    </ligand>
</feature>
<sequence length="244" mass="26540">MIEPLVVEELHYSYPDGTAALRGITLALGTGENVALVGPNGSGKSTLLLHLNGLLLPGRGRIEVGGKPLSASTLEFARRFVGLLFQNPEDQLFMPTVGEDVAFGPQNLGRKGEKLRECVRTALERVGLEPARFLERQSYNLSIGEKKRVALAGVLAMEPEVLVLDEPSAGLDPRSRRRLIRLLTELPQTKLVATHDLDMALETCTRTIIIDRGQVVADGPSDQILADRVLLETHGLELPLSLGR</sequence>
<accession>Q7NNW9</accession>
<name>Y289_GLOVI</name>
<gene>
    <name type="ordered locus">gll0289</name>
</gene>